<accession>P81360</accession>
<proteinExistence type="evidence at protein level"/>
<comment type="miscellaneous">
    <text>On the 2D-gel the determined pI of this unknown protein is: 5.6, its MW is: 29.5 kDa.</text>
</comment>
<sequence>MIYSTEVSNMAGV</sequence>
<keyword id="KW-0903">Direct protein sequencing</keyword>
<reference key="1">
    <citation type="journal article" date="1998" name="Electrophoresis">
        <title>Two-dimensional gel electrophoresis separation and N-terminal sequence analysis of proteins from Clostridium pasteurianum W5.</title>
        <authorList>
            <person name="Flengsrud R."/>
            <person name="Skjeldal L."/>
        </authorList>
    </citation>
    <scope>PROTEIN SEQUENCE</scope>
    <source>
        <strain>ATCC 6013 / DSM 525 / NCIB 9486 / VKM B-1774 / W5</strain>
    </source>
</reference>
<protein>
    <recommendedName>
        <fullName>Unknown protein CP 41 from 2D-PAGE</fullName>
    </recommendedName>
</protein>
<name>UN41_CLOPA</name>
<organism>
    <name type="scientific">Clostridium pasteurianum</name>
    <dbReference type="NCBI Taxonomy" id="1501"/>
    <lineage>
        <taxon>Bacteria</taxon>
        <taxon>Bacillati</taxon>
        <taxon>Bacillota</taxon>
        <taxon>Clostridia</taxon>
        <taxon>Eubacteriales</taxon>
        <taxon>Clostridiaceae</taxon>
        <taxon>Clostridium</taxon>
    </lineage>
</organism>
<feature type="chain" id="PRO_0000055545" description="Unknown protein CP 41 from 2D-PAGE">
    <location>
        <begin position="1"/>
        <end position="13" status="greater than"/>
    </location>
</feature>
<feature type="non-terminal residue">
    <location>
        <position position="13"/>
    </location>
</feature>